<keyword id="KW-0687">Ribonucleoprotein</keyword>
<keyword id="KW-0689">Ribosomal protein</keyword>
<accession>C1EPT7</accession>
<sequence>MAVPFRRTSKTVKRKRRTHFKLSVPGMVECPSCGEAKLAHRVCKACGTYKGKEVISK</sequence>
<reference key="1">
    <citation type="submission" date="2009-02" db="EMBL/GenBank/DDBJ databases">
        <title>Genome sequence of Bacillus cereus 03BB102.</title>
        <authorList>
            <person name="Dodson R.J."/>
            <person name="Jackson P."/>
            <person name="Munk A.C."/>
            <person name="Brettin T."/>
            <person name="Bruce D."/>
            <person name="Detter C."/>
            <person name="Tapia R."/>
            <person name="Han C."/>
            <person name="Sutton G."/>
            <person name="Sims D."/>
        </authorList>
    </citation>
    <scope>NUCLEOTIDE SEQUENCE [LARGE SCALE GENOMIC DNA]</scope>
    <source>
        <strain>03BB102</strain>
    </source>
</reference>
<comment type="similarity">
    <text evidence="1">Belongs to the bacterial ribosomal protein bL32 family.</text>
</comment>
<feature type="chain" id="PRO_1000195958" description="Large ribosomal subunit protein bL32">
    <location>
        <begin position="1"/>
        <end position="57"/>
    </location>
</feature>
<name>RL32_BACC3</name>
<protein>
    <recommendedName>
        <fullName evidence="1">Large ribosomal subunit protein bL32</fullName>
    </recommendedName>
    <alternativeName>
        <fullName evidence="2">50S ribosomal protein L32</fullName>
    </alternativeName>
</protein>
<gene>
    <name evidence="1" type="primary">rpmF</name>
    <name type="ordered locus">BCA_4027</name>
</gene>
<dbReference type="EMBL" id="CP001407">
    <property type="protein sequence ID" value="ACO27920.1"/>
    <property type="molecule type" value="Genomic_DNA"/>
</dbReference>
<dbReference type="RefSeq" id="WP_001984764.1">
    <property type="nucleotide sequence ID" value="NZ_CP009318.1"/>
</dbReference>
<dbReference type="SMR" id="C1EPT7"/>
<dbReference type="GeneID" id="93007188"/>
<dbReference type="KEGG" id="bcx:BCA_4027"/>
<dbReference type="PATRIC" id="fig|572264.18.peg.3980"/>
<dbReference type="Proteomes" id="UP000002210">
    <property type="component" value="Chromosome"/>
</dbReference>
<dbReference type="GO" id="GO:0015934">
    <property type="term" value="C:large ribosomal subunit"/>
    <property type="evidence" value="ECO:0007669"/>
    <property type="project" value="InterPro"/>
</dbReference>
<dbReference type="GO" id="GO:0003735">
    <property type="term" value="F:structural constituent of ribosome"/>
    <property type="evidence" value="ECO:0007669"/>
    <property type="project" value="InterPro"/>
</dbReference>
<dbReference type="GO" id="GO:0006412">
    <property type="term" value="P:translation"/>
    <property type="evidence" value="ECO:0007669"/>
    <property type="project" value="UniProtKB-UniRule"/>
</dbReference>
<dbReference type="HAMAP" id="MF_00340">
    <property type="entry name" value="Ribosomal_bL32"/>
    <property type="match status" value="1"/>
</dbReference>
<dbReference type="InterPro" id="IPR002677">
    <property type="entry name" value="Ribosomal_bL32"/>
</dbReference>
<dbReference type="InterPro" id="IPR044957">
    <property type="entry name" value="Ribosomal_bL32_bact"/>
</dbReference>
<dbReference type="InterPro" id="IPR011332">
    <property type="entry name" value="Ribosomal_zn-bd"/>
</dbReference>
<dbReference type="NCBIfam" id="TIGR01031">
    <property type="entry name" value="rpmF_bact"/>
    <property type="match status" value="1"/>
</dbReference>
<dbReference type="PANTHER" id="PTHR35534">
    <property type="entry name" value="50S RIBOSOMAL PROTEIN L32"/>
    <property type="match status" value="1"/>
</dbReference>
<dbReference type="PANTHER" id="PTHR35534:SF2">
    <property type="entry name" value="LARGE RIBOSOMAL SUBUNIT PROTEIN BL32"/>
    <property type="match status" value="1"/>
</dbReference>
<dbReference type="Pfam" id="PF01783">
    <property type="entry name" value="Ribosomal_L32p"/>
    <property type="match status" value="1"/>
</dbReference>
<dbReference type="SUPFAM" id="SSF57829">
    <property type="entry name" value="Zn-binding ribosomal proteins"/>
    <property type="match status" value="1"/>
</dbReference>
<organism>
    <name type="scientific">Bacillus cereus (strain 03BB102)</name>
    <dbReference type="NCBI Taxonomy" id="572264"/>
    <lineage>
        <taxon>Bacteria</taxon>
        <taxon>Bacillati</taxon>
        <taxon>Bacillota</taxon>
        <taxon>Bacilli</taxon>
        <taxon>Bacillales</taxon>
        <taxon>Bacillaceae</taxon>
        <taxon>Bacillus</taxon>
        <taxon>Bacillus cereus group</taxon>
    </lineage>
</organism>
<proteinExistence type="inferred from homology"/>
<evidence type="ECO:0000255" key="1">
    <source>
        <dbReference type="HAMAP-Rule" id="MF_00340"/>
    </source>
</evidence>
<evidence type="ECO:0000305" key="2"/>